<gene>
    <name evidence="1" type="primary">rplQ</name>
    <name type="ordered locus">FRAAL1111</name>
</gene>
<proteinExistence type="inferred from homology"/>
<name>RL17_FRAAA</name>
<organism>
    <name type="scientific">Frankia alni (strain DSM 45986 / CECT 9034 / ACN14a)</name>
    <dbReference type="NCBI Taxonomy" id="326424"/>
    <lineage>
        <taxon>Bacteria</taxon>
        <taxon>Bacillati</taxon>
        <taxon>Actinomycetota</taxon>
        <taxon>Actinomycetes</taxon>
        <taxon>Frankiales</taxon>
        <taxon>Frankiaceae</taxon>
        <taxon>Frankia</taxon>
    </lineage>
</organism>
<dbReference type="EMBL" id="CT573213">
    <property type="protein sequence ID" value="CAJ59775.1"/>
    <property type="molecule type" value="Genomic_DNA"/>
</dbReference>
<dbReference type="RefSeq" id="WP_011602318.1">
    <property type="nucleotide sequence ID" value="NC_008278.1"/>
</dbReference>
<dbReference type="SMR" id="Q0RRP2"/>
<dbReference type="STRING" id="326424.FRAAL1111"/>
<dbReference type="KEGG" id="fal:FRAAL1111"/>
<dbReference type="eggNOG" id="COG0203">
    <property type="taxonomic scope" value="Bacteria"/>
</dbReference>
<dbReference type="HOGENOM" id="CLU_074407_0_0_11"/>
<dbReference type="OrthoDB" id="9809073at2"/>
<dbReference type="Proteomes" id="UP000000657">
    <property type="component" value="Chromosome"/>
</dbReference>
<dbReference type="GO" id="GO:0022625">
    <property type="term" value="C:cytosolic large ribosomal subunit"/>
    <property type="evidence" value="ECO:0007669"/>
    <property type="project" value="TreeGrafter"/>
</dbReference>
<dbReference type="GO" id="GO:0003735">
    <property type="term" value="F:structural constituent of ribosome"/>
    <property type="evidence" value="ECO:0007669"/>
    <property type="project" value="InterPro"/>
</dbReference>
<dbReference type="GO" id="GO:0006412">
    <property type="term" value="P:translation"/>
    <property type="evidence" value="ECO:0007669"/>
    <property type="project" value="UniProtKB-UniRule"/>
</dbReference>
<dbReference type="FunFam" id="3.90.1030.10:FF:000001">
    <property type="entry name" value="50S ribosomal protein L17"/>
    <property type="match status" value="1"/>
</dbReference>
<dbReference type="Gene3D" id="3.90.1030.10">
    <property type="entry name" value="Ribosomal protein L17"/>
    <property type="match status" value="1"/>
</dbReference>
<dbReference type="HAMAP" id="MF_01368">
    <property type="entry name" value="Ribosomal_bL17"/>
    <property type="match status" value="1"/>
</dbReference>
<dbReference type="InterPro" id="IPR000456">
    <property type="entry name" value="Ribosomal_bL17"/>
</dbReference>
<dbReference type="InterPro" id="IPR047859">
    <property type="entry name" value="Ribosomal_bL17_CS"/>
</dbReference>
<dbReference type="InterPro" id="IPR036373">
    <property type="entry name" value="Ribosomal_bL17_sf"/>
</dbReference>
<dbReference type="NCBIfam" id="TIGR00059">
    <property type="entry name" value="L17"/>
    <property type="match status" value="1"/>
</dbReference>
<dbReference type="PANTHER" id="PTHR14413:SF16">
    <property type="entry name" value="LARGE RIBOSOMAL SUBUNIT PROTEIN BL17M"/>
    <property type="match status" value="1"/>
</dbReference>
<dbReference type="PANTHER" id="PTHR14413">
    <property type="entry name" value="RIBOSOMAL PROTEIN L17"/>
    <property type="match status" value="1"/>
</dbReference>
<dbReference type="Pfam" id="PF01196">
    <property type="entry name" value="Ribosomal_L17"/>
    <property type="match status" value="1"/>
</dbReference>
<dbReference type="SUPFAM" id="SSF64263">
    <property type="entry name" value="Prokaryotic ribosomal protein L17"/>
    <property type="match status" value="1"/>
</dbReference>
<dbReference type="PROSITE" id="PS01167">
    <property type="entry name" value="RIBOSOMAL_L17"/>
    <property type="match status" value="1"/>
</dbReference>
<sequence>MPTPTKGARLGGSPAHERLLLANLATALFEHGGITTTEAKAKRLRPYAERLVTFAKRGDLHARRRVMRHVRDNSVVHTLFTEIGPRYANRDGGYTRIIKLGNRKGDNAPLARIELVEALTVGQQAVGEAERARGTRFSERRKPTGATAEAAEDLASESPTAAAVAAQSAEEQAPVEETLTAQAAETSAATVEETDDDGPAESKS</sequence>
<evidence type="ECO:0000255" key="1">
    <source>
        <dbReference type="HAMAP-Rule" id="MF_01368"/>
    </source>
</evidence>
<evidence type="ECO:0000256" key="2">
    <source>
        <dbReference type="SAM" id="MobiDB-lite"/>
    </source>
</evidence>
<evidence type="ECO:0000305" key="3"/>
<keyword id="KW-1185">Reference proteome</keyword>
<keyword id="KW-0687">Ribonucleoprotein</keyword>
<keyword id="KW-0689">Ribosomal protein</keyword>
<reference key="1">
    <citation type="journal article" date="2007" name="Genome Res.">
        <title>Genome characteristics of facultatively symbiotic Frankia sp. strains reflect host range and host plant biogeography.</title>
        <authorList>
            <person name="Normand P."/>
            <person name="Lapierre P."/>
            <person name="Tisa L.S."/>
            <person name="Gogarten J.P."/>
            <person name="Alloisio N."/>
            <person name="Bagnarol E."/>
            <person name="Bassi C.A."/>
            <person name="Berry A.M."/>
            <person name="Bickhart D.M."/>
            <person name="Choisne N."/>
            <person name="Couloux A."/>
            <person name="Cournoyer B."/>
            <person name="Cruveiller S."/>
            <person name="Daubin V."/>
            <person name="Demange N."/>
            <person name="Francino M.P."/>
            <person name="Goltsman E."/>
            <person name="Huang Y."/>
            <person name="Kopp O.R."/>
            <person name="Labarre L."/>
            <person name="Lapidus A."/>
            <person name="Lavire C."/>
            <person name="Marechal J."/>
            <person name="Martinez M."/>
            <person name="Mastronunzio J.E."/>
            <person name="Mullin B.C."/>
            <person name="Niemann J."/>
            <person name="Pujic P."/>
            <person name="Rawnsley T."/>
            <person name="Rouy Z."/>
            <person name="Schenowitz C."/>
            <person name="Sellstedt A."/>
            <person name="Tavares F."/>
            <person name="Tomkins J.P."/>
            <person name="Vallenet D."/>
            <person name="Valverde C."/>
            <person name="Wall L.G."/>
            <person name="Wang Y."/>
            <person name="Medigue C."/>
            <person name="Benson D.R."/>
        </authorList>
    </citation>
    <scope>NUCLEOTIDE SEQUENCE [LARGE SCALE GENOMIC DNA]</scope>
    <source>
        <strain>DSM 45986 / CECT 9034 / ACN14a</strain>
    </source>
</reference>
<comment type="subunit">
    <text evidence="1">Part of the 50S ribosomal subunit. Contacts protein L32.</text>
</comment>
<comment type="similarity">
    <text evidence="1">Belongs to the bacterial ribosomal protein bL17 family.</text>
</comment>
<feature type="chain" id="PRO_1000055825" description="Large ribosomal subunit protein bL17">
    <location>
        <begin position="1"/>
        <end position="204"/>
    </location>
</feature>
<feature type="region of interest" description="Disordered" evidence="2">
    <location>
        <begin position="124"/>
        <end position="204"/>
    </location>
</feature>
<feature type="compositionally biased region" description="Basic and acidic residues" evidence="2">
    <location>
        <begin position="128"/>
        <end position="142"/>
    </location>
</feature>
<feature type="compositionally biased region" description="Low complexity" evidence="2">
    <location>
        <begin position="156"/>
        <end position="191"/>
    </location>
</feature>
<feature type="compositionally biased region" description="Acidic residues" evidence="2">
    <location>
        <begin position="192"/>
        <end position="204"/>
    </location>
</feature>
<protein>
    <recommendedName>
        <fullName evidence="1">Large ribosomal subunit protein bL17</fullName>
    </recommendedName>
    <alternativeName>
        <fullName evidence="3">50S ribosomal protein L17</fullName>
    </alternativeName>
</protein>
<accession>Q0RRP2</accession>